<dbReference type="EC" id="2.5.1.19" evidence="1"/>
<dbReference type="EMBL" id="CP000804">
    <property type="protein sequence ID" value="ABU57575.1"/>
    <property type="molecule type" value="Genomic_DNA"/>
</dbReference>
<dbReference type="RefSeq" id="WP_012120003.1">
    <property type="nucleotide sequence ID" value="NC_009767.1"/>
</dbReference>
<dbReference type="SMR" id="A7NJA5"/>
<dbReference type="STRING" id="383372.Rcas_1481"/>
<dbReference type="KEGG" id="rca:Rcas_1481"/>
<dbReference type="eggNOG" id="COG0128">
    <property type="taxonomic scope" value="Bacteria"/>
</dbReference>
<dbReference type="HOGENOM" id="CLU_024321_0_1_0"/>
<dbReference type="OrthoDB" id="9809920at2"/>
<dbReference type="UniPathway" id="UPA00053">
    <property type="reaction ID" value="UER00089"/>
</dbReference>
<dbReference type="Proteomes" id="UP000000263">
    <property type="component" value="Chromosome"/>
</dbReference>
<dbReference type="GO" id="GO:0005737">
    <property type="term" value="C:cytoplasm"/>
    <property type="evidence" value="ECO:0007669"/>
    <property type="project" value="UniProtKB-SubCell"/>
</dbReference>
<dbReference type="GO" id="GO:0003866">
    <property type="term" value="F:3-phosphoshikimate 1-carboxyvinyltransferase activity"/>
    <property type="evidence" value="ECO:0007669"/>
    <property type="project" value="UniProtKB-UniRule"/>
</dbReference>
<dbReference type="GO" id="GO:0008652">
    <property type="term" value="P:amino acid biosynthetic process"/>
    <property type="evidence" value="ECO:0007669"/>
    <property type="project" value="UniProtKB-KW"/>
</dbReference>
<dbReference type="GO" id="GO:0009073">
    <property type="term" value="P:aromatic amino acid family biosynthetic process"/>
    <property type="evidence" value="ECO:0007669"/>
    <property type="project" value="UniProtKB-KW"/>
</dbReference>
<dbReference type="GO" id="GO:0009423">
    <property type="term" value="P:chorismate biosynthetic process"/>
    <property type="evidence" value="ECO:0007669"/>
    <property type="project" value="UniProtKB-UniRule"/>
</dbReference>
<dbReference type="CDD" id="cd01556">
    <property type="entry name" value="EPSP_synthase"/>
    <property type="match status" value="1"/>
</dbReference>
<dbReference type="FunFam" id="3.65.10.10:FF:000005">
    <property type="entry name" value="3-phosphoshikimate 1-carboxyvinyltransferase"/>
    <property type="match status" value="1"/>
</dbReference>
<dbReference type="FunFam" id="3.65.10.10:FF:000006">
    <property type="entry name" value="3-phosphoshikimate 1-carboxyvinyltransferase"/>
    <property type="match status" value="1"/>
</dbReference>
<dbReference type="Gene3D" id="3.65.10.10">
    <property type="entry name" value="Enolpyruvate transferase domain"/>
    <property type="match status" value="2"/>
</dbReference>
<dbReference type="HAMAP" id="MF_00210">
    <property type="entry name" value="EPSP_synth"/>
    <property type="match status" value="1"/>
</dbReference>
<dbReference type="InterPro" id="IPR001986">
    <property type="entry name" value="Enolpyruvate_Tfrase_dom"/>
</dbReference>
<dbReference type="InterPro" id="IPR036968">
    <property type="entry name" value="Enolpyruvate_Tfrase_sf"/>
</dbReference>
<dbReference type="InterPro" id="IPR006264">
    <property type="entry name" value="EPSP_synthase"/>
</dbReference>
<dbReference type="InterPro" id="IPR023193">
    <property type="entry name" value="EPSP_synthase_CS"/>
</dbReference>
<dbReference type="InterPro" id="IPR013792">
    <property type="entry name" value="RNA3'P_cycl/enolpyr_Trfase_a/b"/>
</dbReference>
<dbReference type="NCBIfam" id="TIGR01356">
    <property type="entry name" value="aroA"/>
    <property type="match status" value="1"/>
</dbReference>
<dbReference type="PANTHER" id="PTHR21090">
    <property type="entry name" value="AROM/DEHYDROQUINATE SYNTHASE"/>
    <property type="match status" value="1"/>
</dbReference>
<dbReference type="PANTHER" id="PTHR21090:SF5">
    <property type="entry name" value="PENTAFUNCTIONAL AROM POLYPEPTIDE"/>
    <property type="match status" value="1"/>
</dbReference>
<dbReference type="Pfam" id="PF00275">
    <property type="entry name" value="EPSP_synthase"/>
    <property type="match status" value="1"/>
</dbReference>
<dbReference type="PIRSF" id="PIRSF000505">
    <property type="entry name" value="EPSPS"/>
    <property type="match status" value="1"/>
</dbReference>
<dbReference type="SUPFAM" id="SSF55205">
    <property type="entry name" value="EPT/RTPC-like"/>
    <property type="match status" value="1"/>
</dbReference>
<dbReference type="PROSITE" id="PS00104">
    <property type="entry name" value="EPSP_SYNTHASE_1"/>
    <property type="match status" value="1"/>
</dbReference>
<dbReference type="PROSITE" id="PS00885">
    <property type="entry name" value="EPSP_SYNTHASE_2"/>
    <property type="match status" value="1"/>
</dbReference>
<gene>
    <name evidence="1" type="primary">aroA</name>
    <name type="ordered locus">Rcas_1481</name>
</gene>
<reference key="1">
    <citation type="submission" date="2007-08" db="EMBL/GenBank/DDBJ databases">
        <title>Complete sequence of Roseiflexus castenholzii DSM 13941.</title>
        <authorList>
            <consortium name="US DOE Joint Genome Institute"/>
            <person name="Copeland A."/>
            <person name="Lucas S."/>
            <person name="Lapidus A."/>
            <person name="Barry K."/>
            <person name="Glavina del Rio T."/>
            <person name="Dalin E."/>
            <person name="Tice H."/>
            <person name="Pitluck S."/>
            <person name="Thompson L.S."/>
            <person name="Brettin T."/>
            <person name="Bruce D."/>
            <person name="Detter J.C."/>
            <person name="Han C."/>
            <person name="Tapia R."/>
            <person name="Schmutz J."/>
            <person name="Larimer F."/>
            <person name="Land M."/>
            <person name="Hauser L."/>
            <person name="Kyrpides N."/>
            <person name="Mikhailova N."/>
            <person name="Bryant D.A."/>
            <person name="Hanada S."/>
            <person name="Tsukatani Y."/>
            <person name="Richardson P."/>
        </authorList>
    </citation>
    <scope>NUCLEOTIDE SEQUENCE [LARGE SCALE GENOMIC DNA]</scope>
    <source>
        <strain>DSM 13941 / HLO8</strain>
    </source>
</reference>
<comment type="function">
    <text evidence="1">Catalyzes the transfer of the enolpyruvyl moiety of phosphoenolpyruvate (PEP) to the 5-hydroxyl of shikimate-3-phosphate (S3P) to produce enolpyruvyl shikimate-3-phosphate and inorganic phosphate.</text>
</comment>
<comment type="catalytic activity">
    <reaction evidence="1">
        <text>3-phosphoshikimate + phosphoenolpyruvate = 5-O-(1-carboxyvinyl)-3-phosphoshikimate + phosphate</text>
        <dbReference type="Rhea" id="RHEA:21256"/>
        <dbReference type="ChEBI" id="CHEBI:43474"/>
        <dbReference type="ChEBI" id="CHEBI:57701"/>
        <dbReference type="ChEBI" id="CHEBI:58702"/>
        <dbReference type="ChEBI" id="CHEBI:145989"/>
        <dbReference type="EC" id="2.5.1.19"/>
    </reaction>
    <physiologicalReaction direction="left-to-right" evidence="1">
        <dbReference type="Rhea" id="RHEA:21257"/>
    </physiologicalReaction>
</comment>
<comment type="pathway">
    <text evidence="1">Metabolic intermediate biosynthesis; chorismate biosynthesis; chorismate from D-erythrose 4-phosphate and phosphoenolpyruvate: step 6/7.</text>
</comment>
<comment type="subunit">
    <text evidence="1">Monomer.</text>
</comment>
<comment type="subcellular location">
    <subcellularLocation>
        <location evidence="1">Cytoplasm</location>
    </subcellularLocation>
</comment>
<comment type="similarity">
    <text evidence="1">Belongs to the EPSP synthase family.</text>
</comment>
<keyword id="KW-0028">Amino-acid biosynthesis</keyword>
<keyword id="KW-0057">Aromatic amino acid biosynthesis</keyword>
<keyword id="KW-0963">Cytoplasm</keyword>
<keyword id="KW-1185">Reference proteome</keyword>
<keyword id="KW-0808">Transferase</keyword>
<sequence length="431" mass="45240">MIHTMIAPRRLRGIIDLPGDKSISHRAVLLNAIATGAAEVANFLTGADCLSTIACVQALGVRVERHEDTVRVFGAGLRSLREPVDVLDCGNSGTTLRLLTGMLAGQEGIFAVLTGDASLRSRPQQRIVAPLRALGATLDGRDRGNRAPLVVRGAYLHGGAYDLPIASAQVKSALLLAALFGDGTLTLTGRTDGRDHTERMLAAMGATITVDGQTIRLTPPDRSEALHPLSLRVPGDPSSATFWWVAAALHPDAELTTTGVCLNPTRTGALDALRAMGAQIDVANQRVEGGEPVGDVTVRSSSLHGIVIEGALIPRLIDELPVLALAAACAEGETIIRDAQELRVKETDRIATVVAGLTALGAVVEPTEDGMIIAGGGNLRGATLESHGDHRLAMTWAIAGLVGAGETTLHGAEAVDVSYPEFWNVLRRIRE</sequence>
<name>AROA_ROSCS</name>
<evidence type="ECO:0000255" key="1">
    <source>
        <dbReference type="HAMAP-Rule" id="MF_00210"/>
    </source>
</evidence>
<feature type="chain" id="PRO_1000077994" description="3-phosphoshikimate 1-carboxyvinyltransferase">
    <location>
        <begin position="1"/>
        <end position="431"/>
    </location>
</feature>
<feature type="active site" description="Proton acceptor" evidence="1">
    <location>
        <position position="318"/>
    </location>
</feature>
<feature type="binding site" evidence="1">
    <location>
        <position position="21"/>
    </location>
    <ligand>
        <name>3-phosphoshikimate</name>
        <dbReference type="ChEBI" id="CHEBI:145989"/>
    </ligand>
</feature>
<feature type="binding site" evidence="1">
    <location>
        <position position="21"/>
    </location>
    <ligand>
        <name>phosphoenolpyruvate</name>
        <dbReference type="ChEBI" id="CHEBI:58702"/>
    </ligand>
</feature>
<feature type="binding site" evidence="1">
    <location>
        <position position="22"/>
    </location>
    <ligand>
        <name>3-phosphoshikimate</name>
        <dbReference type="ChEBI" id="CHEBI:145989"/>
    </ligand>
</feature>
<feature type="binding site" evidence="1">
    <location>
        <position position="26"/>
    </location>
    <ligand>
        <name>3-phosphoshikimate</name>
        <dbReference type="ChEBI" id="CHEBI:145989"/>
    </ligand>
</feature>
<feature type="binding site" evidence="1">
    <location>
        <position position="93"/>
    </location>
    <ligand>
        <name>phosphoenolpyruvate</name>
        <dbReference type="ChEBI" id="CHEBI:58702"/>
    </ligand>
</feature>
<feature type="binding site" evidence="1">
    <location>
        <position position="122"/>
    </location>
    <ligand>
        <name>phosphoenolpyruvate</name>
        <dbReference type="ChEBI" id="CHEBI:58702"/>
    </ligand>
</feature>
<feature type="binding site" evidence="1">
    <location>
        <position position="167"/>
    </location>
    <ligand>
        <name>3-phosphoshikimate</name>
        <dbReference type="ChEBI" id="CHEBI:145989"/>
    </ligand>
</feature>
<feature type="binding site" evidence="1">
    <location>
        <position position="169"/>
    </location>
    <ligand>
        <name>3-phosphoshikimate</name>
        <dbReference type="ChEBI" id="CHEBI:145989"/>
    </ligand>
</feature>
<feature type="binding site" evidence="1">
    <location>
        <position position="169"/>
    </location>
    <ligand>
        <name>phosphoenolpyruvate</name>
        <dbReference type="ChEBI" id="CHEBI:58702"/>
    </ligand>
</feature>
<feature type="binding site" evidence="1">
    <location>
        <position position="318"/>
    </location>
    <ligand>
        <name>3-phosphoshikimate</name>
        <dbReference type="ChEBI" id="CHEBI:145989"/>
    </ligand>
</feature>
<feature type="binding site" evidence="1">
    <location>
        <position position="345"/>
    </location>
    <ligand>
        <name>3-phosphoshikimate</name>
        <dbReference type="ChEBI" id="CHEBI:145989"/>
    </ligand>
</feature>
<feature type="binding site" evidence="1">
    <location>
        <position position="349"/>
    </location>
    <ligand>
        <name>phosphoenolpyruvate</name>
        <dbReference type="ChEBI" id="CHEBI:58702"/>
    </ligand>
</feature>
<feature type="binding site" evidence="1">
    <location>
        <position position="391"/>
    </location>
    <ligand>
        <name>phosphoenolpyruvate</name>
        <dbReference type="ChEBI" id="CHEBI:58702"/>
    </ligand>
</feature>
<accession>A7NJA5</accession>
<organism>
    <name type="scientific">Roseiflexus castenholzii (strain DSM 13941 / HLO8)</name>
    <dbReference type="NCBI Taxonomy" id="383372"/>
    <lineage>
        <taxon>Bacteria</taxon>
        <taxon>Bacillati</taxon>
        <taxon>Chloroflexota</taxon>
        <taxon>Chloroflexia</taxon>
        <taxon>Chloroflexales</taxon>
        <taxon>Roseiflexineae</taxon>
        <taxon>Roseiflexaceae</taxon>
        <taxon>Roseiflexus</taxon>
    </lineage>
</organism>
<proteinExistence type="inferred from homology"/>
<protein>
    <recommendedName>
        <fullName evidence="1">3-phosphoshikimate 1-carboxyvinyltransferase</fullName>
        <ecNumber evidence="1">2.5.1.19</ecNumber>
    </recommendedName>
    <alternativeName>
        <fullName evidence="1">5-enolpyruvylshikimate-3-phosphate synthase</fullName>
        <shortName evidence="1">EPSP synthase</shortName>
        <shortName evidence="1">EPSPS</shortName>
    </alternativeName>
</protein>